<comment type="caution">
    <text evidence="1">Product of a dubious gene prediction unlikely to encode a functional protein. Because of that it is not part of the S.cerevisiae S288c complete/reference proteome set.</text>
</comment>
<accession>O13588</accession>
<sequence length="104" mass="11336">MIVNNTHVLTLPLYTTTTCHTHPHLYTDFTYAHGCYSIYHLKLTLLSDSTSLHGPSLTESVPNALTSLCTALASAVYTLCHLPITPIIIHILISISHSAVPNIV</sequence>
<organism>
    <name type="scientific">Saccharomyces cerevisiae (strain ATCC 204508 / S288c)</name>
    <name type="common">Baker's yeast</name>
    <dbReference type="NCBI Taxonomy" id="559292"/>
    <lineage>
        <taxon>Eukaryota</taxon>
        <taxon>Fungi</taxon>
        <taxon>Dikarya</taxon>
        <taxon>Ascomycota</taxon>
        <taxon>Saccharomycotina</taxon>
        <taxon>Saccharomycetes</taxon>
        <taxon>Saccharomycetales</taxon>
        <taxon>Saccharomycetaceae</taxon>
        <taxon>Saccharomyces</taxon>
    </lineage>
</organism>
<gene>
    <name type="ordered locus">YAL069W</name>
</gene>
<protein>
    <recommendedName>
        <fullName>Putative uncharacterized protein YAL069W</fullName>
    </recommendedName>
</protein>
<proteinExistence type="uncertain"/>
<reference key="1">
    <citation type="journal article" date="1995" name="Proc. Natl. Acad. Sci. U.S.A.">
        <title>The nucleotide sequence of chromosome I from Saccharomyces cerevisiae.</title>
        <authorList>
            <person name="Bussey H."/>
            <person name="Kaback D.B."/>
            <person name="Zhong W.-W."/>
            <person name="Vo D.H."/>
            <person name="Clark M.W."/>
            <person name="Fortin N."/>
            <person name="Hall J."/>
            <person name="Ouellette B.F.F."/>
            <person name="Keng T."/>
            <person name="Barton A.B."/>
            <person name="Su Y."/>
            <person name="Davies C.J."/>
            <person name="Storms R.K."/>
        </authorList>
    </citation>
    <scope>NUCLEOTIDE SEQUENCE [LARGE SCALE GENOMIC DNA]</scope>
    <source>
        <strain>ATCC 204508 / S288c</strain>
    </source>
</reference>
<reference key="2">
    <citation type="journal article" date="2014" name="G3 (Bethesda)">
        <title>The reference genome sequence of Saccharomyces cerevisiae: Then and now.</title>
        <authorList>
            <person name="Engel S.R."/>
            <person name="Dietrich F.S."/>
            <person name="Fisk D.G."/>
            <person name="Binkley G."/>
            <person name="Balakrishnan R."/>
            <person name="Costanzo M.C."/>
            <person name="Dwight S.S."/>
            <person name="Hitz B.C."/>
            <person name="Karra K."/>
            <person name="Nash R.S."/>
            <person name="Weng S."/>
            <person name="Wong E.D."/>
            <person name="Lloyd P."/>
            <person name="Skrzypek M.S."/>
            <person name="Miyasato S.R."/>
            <person name="Simison M."/>
            <person name="Cherry J.M."/>
        </authorList>
    </citation>
    <scope>GENOME REANNOTATION</scope>
    <source>
        <strain>ATCC 204508 / S288c</strain>
    </source>
</reference>
<reference key="3">
    <citation type="journal article" date="2007" name="Genome Res.">
        <title>Approaching a complete repository of sequence-verified protein-encoding clones for Saccharomyces cerevisiae.</title>
        <authorList>
            <person name="Hu Y."/>
            <person name="Rolfs A."/>
            <person name="Bhullar B."/>
            <person name="Murthy T.V.S."/>
            <person name="Zhu C."/>
            <person name="Berger M.F."/>
            <person name="Camargo A.A."/>
            <person name="Kelley F."/>
            <person name="McCarron S."/>
            <person name="Jepson D."/>
            <person name="Richardson A."/>
            <person name="Raphael J."/>
            <person name="Moreira D."/>
            <person name="Taycher E."/>
            <person name="Zuo D."/>
            <person name="Mohr S."/>
            <person name="Kane M.F."/>
            <person name="Williamson J."/>
            <person name="Simpson A.J.G."/>
            <person name="Bulyk M.L."/>
            <person name="Harlow E."/>
            <person name="Marsischky G."/>
            <person name="Kolodner R.D."/>
            <person name="LaBaer J."/>
        </authorList>
    </citation>
    <scope>NUCLEOTIDE SEQUENCE [GENOMIC DNA]</scope>
    <source>
        <strain>ATCC 204508 / S288c</strain>
    </source>
</reference>
<evidence type="ECO:0000305" key="1">
    <source>
    </source>
</evidence>
<name>YA069_YEAST</name>
<feature type="chain" id="PRO_0000299789" description="Putative uncharacterized protein YAL069W">
    <location>
        <begin position="1"/>
        <end position="104"/>
    </location>
</feature>
<dbReference type="EMBL" id="U73805">
    <property type="protein sequence ID" value="AAB70014.1"/>
    <property type="molecule type" value="Genomic_DNA"/>
</dbReference>
<dbReference type="EMBL" id="AY558170">
    <property type="protein sequence ID" value="AAS56496.1"/>
    <property type="molecule type" value="Genomic_DNA"/>
</dbReference>
<dbReference type="IntAct" id="O13588">
    <property type="interactions" value="1"/>
</dbReference>
<dbReference type="MINT" id="O13588"/>
<dbReference type="STRING" id="4932.YAL069W"/>
<dbReference type="PaxDb" id="4932-YAL069W"/>
<dbReference type="EnsemblFungi" id="YAL069W_mRNA">
    <property type="protein sequence ID" value="YAL069W"/>
    <property type="gene ID" value="YAL069W"/>
</dbReference>
<dbReference type="AGR" id="SGD:S000002143"/>
<dbReference type="SGD" id="S000002143">
    <property type="gene designation" value="YAL069W"/>
</dbReference>
<dbReference type="HOGENOM" id="CLU_2252166_0_0_1"/>